<keyword id="KW-0963">Cytoplasm</keyword>
<keyword id="KW-0489">Methyltransferase</keyword>
<keyword id="KW-0545">Nucleotide biosynthesis</keyword>
<keyword id="KW-1185">Reference proteome</keyword>
<keyword id="KW-0808">Transferase</keyword>
<sequence length="283" mass="32350">MKQYLQLCQRIVDEGQWVENKRTGTRCLTVINADLEYDVANNQFPMITTRKSYYKAAIAELLGYLRGYDSAAQFREIGCKTWDANANENSAWLNNPHRKGEDDMGRVYGVQGRAWQRPDGSTLDQLAKVINNLKNGIDDRGEIISFYNPGEFELGCLRPCMHTHTFSLLGDTLYLTSIQRSCDVPLGLNFNQIQCFVLLALVAQITGHKAGKAYHKITNAHIYENQLELMRDVQLKREPFASPQLKINPNIKSLNDIETWVTRDDFEVTGYECHEAIQYPFSV</sequence>
<proteinExistence type="inferred from homology"/>
<name>TYSY_PSET1</name>
<comment type="function">
    <text evidence="1">Catalyzes the reductive methylation of 2'-deoxyuridine-5'-monophosphate (dUMP) to 2'-deoxythymidine-5'-monophosphate (dTMP) while utilizing 5,10-methylenetetrahydrofolate (mTHF) as the methyl donor and reductant in the reaction, yielding dihydrofolate (DHF) as a by-product. This enzymatic reaction provides an intracellular de novo source of dTMP, an essential precursor for DNA biosynthesis.</text>
</comment>
<comment type="catalytic activity">
    <reaction evidence="1">
        <text>dUMP + (6R)-5,10-methylene-5,6,7,8-tetrahydrofolate = 7,8-dihydrofolate + dTMP</text>
        <dbReference type="Rhea" id="RHEA:12104"/>
        <dbReference type="ChEBI" id="CHEBI:15636"/>
        <dbReference type="ChEBI" id="CHEBI:57451"/>
        <dbReference type="ChEBI" id="CHEBI:63528"/>
        <dbReference type="ChEBI" id="CHEBI:246422"/>
        <dbReference type="EC" id="2.1.1.45"/>
    </reaction>
</comment>
<comment type="pathway">
    <text evidence="1">Pyrimidine metabolism; dTTP biosynthesis.</text>
</comment>
<comment type="subunit">
    <text evidence="1">Homodimer.</text>
</comment>
<comment type="subcellular location">
    <subcellularLocation>
        <location evidence="1">Cytoplasm</location>
    </subcellularLocation>
</comment>
<comment type="similarity">
    <text evidence="1">Belongs to the thymidylate synthase family. Bacterial-type ThyA subfamily.</text>
</comment>
<dbReference type="EC" id="2.1.1.45" evidence="1"/>
<dbReference type="EMBL" id="CR954246">
    <property type="protein sequence ID" value="CAI85832.1"/>
    <property type="molecule type" value="Genomic_DNA"/>
</dbReference>
<dbReference type="SMR" id="Q3IDN1"/>
<dbReference type="STRING" id="326442.PSHAa0749"/>
<dbReference type="KEGG" id="pha:PSHAa0749"/>
<dbReference type="eggNOG" id="COG0207">
    <property type="taxonomic scope" value="Bacteria"/>
</dbReference>
<dbReference type="HOGENOM" id="CLU_021669_0_1_6"/>
<dbReference type="BioCyc" id="PHAL326442:PSHA_RS03655-MONOMER"/>
<dbReference type="UniPathway" id="UPA00575"/>
<dbReference type="Proteomes" id="UP000006843">
    <property type="component" value="Chromosome I"/>
</dbReference>
<dbReference type="GO" id="GO:0005829">
    <property type="term" value="C:cytosol"/>
    <property type="evidence" value="ECO:0007669"/>
    <property type="project" value="TreeGrafter"/>
</dbReference>
<dbReference type="GO" id="GO:0004799">
    <property type="term" value="F:thymidylate synthase activity"/>
    <property type="evidence" value="ECO:0007669"/>
    <property type="project" value="UniProtKB-UniRule"/>
</dbReference>
<dbReference type="GO" id="GO:0006231">
    <property type="term" value="P:dTMP biosynthetic process"/>
    <property type="evidence" value="ECO:0007669"/>
    <property type="project" value="UniProtKB-UniRule"/>
</dbReference>
<dbReference type="GO" id="GO:0006235">
    <property type="term" value="P:dTTP biosynthetic process"/>
    <property type="evidence" value="ECO:0007669"/>
    <property type="project" value="UniProtKB-UniRule"/>
</dbReference>
<dbReference type="GO" id="GO:0032259">
    <property type="term" value="P:methylation"/>
    <property type="evidence" value="ECO:0007669"/>
    <property type="project" value="UniProtKB-KW"/>
</dbReference>
<dbReference type="CDD" id="cd00351">
    <property type="entry name" value="TS_Pyrimidine_HMase"/>
    <property type="match status" value="1"/>
</dbReference>
<dbReference type="Gene3D" id="3.30.572.10">
    <property type="entry name" value="Thymidylate synthase/dCMP hydroxymethylase domain"/>
    <property type="match status" value="1"/>
</dbReference>
<dbReference type="HAMAP" id="MF_00008">
    <property type="entry name" value="Thymidy_synth_bact"/>
    <property type="match status" value="1"/>
</dbReference>
<dbReference type="InterPro" id="IPR045097">
    <property type="entry name" value="Thymidate_synth/dCMP_Mease"/>
</dbReference>
<dbReference type="InterPro" id="IPR023451">
    <property type="entry name" value="Thymidate_synth/dCMP_Mease_dom"/>
</dbReference>
<dbReference type="InterPro" id="IPR036926">
    <property type="entry name" value="Thymidate_synth/dCMP_Mease_sf"/>
</dbReference>
<dbReference type="InterPro" id="IPR000398">
    <property type="entry name" value="Thymidylate_synthase"/>
</dbReference>
<dbReference type="InterPro" id="IPR020940">
    <property type="entry name" value="Thymidylate_synthase_AS"/>
</dbReference>
<dbReference type="NCBIfam" id="NF002498">
    <property type="entry name" value="PRK01827.1-4"/>
    <property type="match status" value="1"/>
</dbReference>
<dbReference type="NCBIfam" id="TIGR03284">
    <property type="entry name" value="thym_sym"/>
    <property type="match status" value="1"/>
</dbReference>
<dbReference type="PANTHER" id="PTHR11548:SF9">
    <property type="entry name" value="THYMIDYLATE SYNTHASE"/>
    <property type="match status" value="1"/>
</dbReference>
<dbReference type="PANTHER" id="PTHR11548">
    <property type="entry name" value="THYMIDYLATE SYNTHASE 1"/>
    <property type="match status" value="1"/>
</dbReference>
<dbReference type="Pfam" id="PF00303">
    <property type="entry name" value="Thymidylat_synt"/>
    <property type="match status" value="1"/>
</dbReference>
<dbReference type="PRINTS" id="PR00108">
    <property type="entry name" value="THYMDSNTHASE"/>
</dbReference>
<dbReference type="SUPFAM" id="SSF55831">
    <property type="entry name" value="Thymidylate synthase/dCMP hydroxymethylase"/>
    <property type="match status" value="1"/>
</dbReference>
<dbReference type="PROSITE" id="PS00091">
    <property type="entry name" value="THYMIDYLATE_SYNTHASE"/>
    <property type="match status" value="1"/>
</dbReference>
<feature type="chain" id="PRO_1000000652" description="Thymidylate synthase">
    <location>
        <begin position="1"/>
        <end position="283"/>
    </location>
</feature>
<feature type="active site" description="Nucleophile" evidence="1">
    <location>
        <position position="160"/>
    </location>
</feature>
<feature type="binding site" evidence="1">
    <location>
        <position position="22"/>
    </location>
    <ligand>
        <name>dUMP</name>
        <dbReference type="ChEBI" id="CHEBI:246422"/>
    </ligand>
</feature>
<feature type="binding site" evidence="1">
    <location>
        <begin position="180"/>
        <end position="183"/>
    </location>
    <ligand>
        <name>dUMP</name>
        <dbReference type="ChEBI" id="CHEBI:246422"/>
    </ligand>
</feature>
<feature type="binding site" evidence="1">
    <location>
        <position position="183"/>
    </location>
    <ligand>
        <name>(6R)-5,10-methylene-5,6,7,8-tetrahydrofolate</name>
        <dbReference type="ChEBI" id="CHEBI:15636"/>
    </ligand>
</feature>
<feature type="binding site" evidence="1">
    <location>
        <position position="191"/>
    </location>
    <ligand>
        <name>dUMP</name>
        <dbReference type="ChEBI" id="CHEBI:246422"/>
    </ligand>
</feature>
<feature type="binding site" evidence="1">
    <location>
        <begin position="221"/>
        <end position="223"/>
    </location>
    <ligand>
        <name>dUMP</name>
        <dbReference type="ChEBI" id="CHEBI:246422"/>
    </ligand>
</feature>
<feature type="binding site" evidence="1">
    <location>
        <position position="282"/>
    </location>
    <ligand>
        <name>(6R)-5,10-methylene-5,6,7,8-tetrahydrofolate</name>
        <dbReference type="ChEBI" id="CHEBI:15636"/>
    </ligand>
</feature>
<evidence type="ECO:0000255" key="1">
    <source>
        <dbReference type="HAMAP-Rule" id="MF_00008"/>
    </source>
</evidence>
<reference key="1">
    <citation type="journal article" date="2005" name="Genome Res.">
        <title>Coping with cold: the genome of the versatile marine Antarctica bacterium Pseudoalteromonas haloplanktis TAC125.</title>
        <authorList>
            <person name="Medigue C."/>
            <person name="Krin E."/>
            <person name="Pascal G."/>
            <person name="Barbe V."/>
            <person name="Bernsel A."/>
            <person name="Bertin P.N."/>
            <person name="Cheung F."/>
            <person name="Cruveiller S."/>
            <person name="D'Amico S."/>
            <person name="Duilio A."/>
            <person name="Fang G."/>
            <person name="Feller G."/>
            <person name="Ho C."/>
            <person name="Mangenot S."/>
            <person name="Marino G."/>
            <person name="Nilsson J."/>
            <person name="Parrilli E."/>
            <person name="Rocha E.P.C."/>
            <person name="Rouy Z."/>
            <person name="Sekowska A."/>
            <person name="Tutino M.L."/>
            <person name="Vallenet D."/>
            <person name="von Heijne G."/>
            <person name="Danchin A."/>
        </authorList>
    </citation>
    <scope>NUCLEOTIDE SEQUENCE [LARGE SCALE GENOMIC DNA]</scope>
    <source>
        <strain>TAC 125</strain>
    </source>
</reference>
<accession>Q3IDN1</accession>
<protein>
    <recommendedName>
        <fullName evidence="1">Thymidylate synthase</fullName>
        <shortName evidence="1">TS</shortName>
        <shortName evidence="1">TSase</shortName>
        <ecNumber evidence="1">2.1.1.45</ecNumber>
    </recommendedName>
</protein>
<gene>
    <name evidence="1" type="primary">thyA</name>
    <name type="ordered locus">PSHAa0749</name>
</gene>
<organism>
    <name type="scientific">Pseudoalteromonas translucida (strain TAC 125)</name>
    <dbReference type="NCBI Taxonomy" id="326442"/>
    <lineage>
        <taxon>Bacteria</taxon>
        <taxon>Pseudomonadati</taxon>
        <taxon>Pseudomonadota</taxon>
        <taxon>Gammaproteobacteria</taxon>
        <taxon>Alteromonadales</taxon>
        <taxon>Pseudoalteromonadaceae</taxon>
        <taxon>Pseudoalteromonas</taxon>
    </lineage>
</organism>